<dbReference type="EC" id="1.11.1.24" evidence="1"/>
<dbReference type="EMBL" id="U06099">
    <property type="protein sequence ID" value="AAA19959.1"/>
    <property type="molecule type" value="mRNA"/>
</dbReference>
<dbReference type="EMBL" id="BC058481">
    <property type="protein sequence ID" value="AAH58481.1"/>
    <property type="molecule type" value="mRNA"/>
</dbReference>
<dbReference type="PIR" id="A57716">
    <property type="entry name" value="A57716"/>
</dbReference>
<dbReference type="RefSeq" id="NP_058865.1">
    <property type="nucleotide sequence ID" value="NM_017169.1"/>
</dbReference>
<dbReference type="RefSeq" id="XP_006255306.1">
    <property type="nucleotide sequence ID" value="XM_006255244.1"/>
</dbReference>
<dbReference type="SMR" id="P35704"/>
<dbReference type="BioGRID" id="247997">
    <property type="interactions" value="10"/>
</dbReference>
<dbReference type="FunCoup" id="P35704">
    <property type="interactions" value="1793"/>
</dbReference>
<dbReference type="IntAct" id="P35704">
    <property type="interactions" value="5"/>
</dbReference>
<dbReference type="MINT" id="P35704"/>
<dbReference type="STRING" id="10116.ENSRNOP00000004799"/>
<dbReference type="PeroxiBase" id="4477">
    <property type="entry name" value="Rno2CysPrx02"/>
</dbReference>
<dbReference type="GlyGen" id="P35704">
    <property type="glycosylation" value="1 site, 1 O-linked glycan (1 site)"/>
</dbReference>
<dbReference type="iPTMnet" id="P35704"/>
<dbReference type="PhosphoSitePlus" id="P35704"/>
<dbReference type="SwissPalm" id="P35704"/>
<dbReference type="jPOST" id="P35704"/>
<dbReference type="PaxDb" id="10116-ENSRNOP00000004799"/>
<dbReference type="GeneID" id="29338"/>
<dbReference type="KEGG" id="rno:29338"/>
<dbReference type="AGR" id="RGD:3838"/>
<dbReference type="CTD" id="7001"/>
<dbReference type="RGD" id="3838">
    <property type="gene designation" value="Prdx2"/>
</dbReference>
<dbReference type="eggNOG" id="KOG0852">
    <property type="taxonomic scope" value="Eukaryota"/>
</dbReference>
<dbReference type="InParanoid" id="P35704"/>
<dbReference type="OrthoDB" id="185659at2759"/>
<dbReference type="PhylomeDB" id="P35704"/>
<dbReference type="TreeFam" id="TF105181"/>
<dbReference type="Reactome" id="R-RNO-3299685">
    <property type="pathway name" value="Detoxification of Reactive Oxygen Species"/>
</dbReference>
<dbReference type="Reactome" id="R-RNO-5628897">
    <property type="pathway name" value="TP53 Regulates Metabolic Genes"/>
</dbReference>
<dbReference type="PRO" id="PR:P35704"/>
<dbReference type="Proteomes" id="UP000002494">
    <property type="component" value="Unplaced"/>
</dbReference>
<dbReference type="GO" id="GO:0005829">
    <property type="term" value="C:cytosol"/>
    <property type="evidence" value="ECO:0000318"/>
    <property type="project" value="GO_Central"/>
</dbReference>
<dbReference type="GO" id="GO:0016209">
    <property type="term" value="F:antioxidant activity"/>
    <property type="evidence" value="ECO:0000266"/>
    <property type="project" value="RGD"/>
</dbReference>
<dbReference type="GO" id="GO:0008379">
    <property type="term" value="F:thioredoxin peroxidase activity"/>
    <property type="evidence" value="ECO:0000266"/>
    <property type="project" value="RGD"/>
</dbReference>
<dbReference type="GO" id="GO:0045454">
    <property type="term" value="P:cell redox homeostasis"/>
    <property type="evidence" value="ECO:0000318"/>
    <property type="project" value="GO_Central"/>
</dbReference>
<dbReference type="GO" id="GO:0034599">
    <property type="term" value="P:cellular response to oxidative stress"/>
    <property type="evidence" value="ECO:0000266"/>
    <property type="project" value="RGD"/>
</dbReference>
<dbReference type="GO" id="GO:0002357">
    <property type="term" value="P:defense response to tumor cell"/>
    <property type="evidence" value="ECO:0000266"/>
    <property type="project" value="RGD"/>
</dbReference>
<dbReference type="GO" id="GO:0097191">
    <property type="term" value="P:extrinsic apoptotic signaling pathway"/>
    <property type="evidence" value="ECO:0000266"/>
    <property type="project" value="RGD"/>
</dbReference>
<dbReference type="GO" id="GO:0042744">
    <property type="term" value="P:hydrogen peroxide catabolic process"/>
    <property type="evidence" value="ECO:0000266"/>
    <property type="project" value="RGD"/>
</dbReference>
<dbReference type="GO" id="GO:0042743">
    <property type="term" value="P:hydrogen peroxide metabolic process"/>
    <property type="evidence" value="ECO:0000266"/>
    <property type="project" value="RGD"/>
</dbReference>
<dbReference type="GO" id="GO:0045321">
    <property type="term" value="P:leukocyte activation"/>
    <property type="evidence" value="ECO:0000318"/>
    <property type="project" value="GO_Central"/>
</dbReference>
<dbReference type="GO" id="GO:2001237">
    <property type="term" value="P:negative regulation of extrinsic apoptotic signaling pathway"/>
    <property type="evidence" value="ECO:0000266"/>
    <property type="project" value="RGD"/>
</dbReference>
<dbReference type="GO" id="GO:2001240">
    <property type="term" value="P:negative regulation of extrinsic apoptotic signaling pathway in absence of ligand"/>
    <property type="evidence" value="ECO:0000266"/>
    <property type="project" value="RGD"/>
</dbReference>
<dbReference type="GO" id="GO:0031665">
    <property type="term" value="P:negative regulation of lipopolysaccharide-mediated signaling pathway"/>
    <property type="evidence" value="ECO:0000266"/>
    <property type="project" value="RGD"/>
</dbReference>
<dbReference type="GO" id="GO:0043524">
    <property type="term" value="P:negative regulation of neuron apoptotic process"/>
    <property type="evidence" value="ECO:0000315"/>
    <property type="project" value="RGD"/>
</dbReference>
<dbReference type="GO" id="GO:0045581">
    <property type="term" value="P:negative regulation of T cell differentiation"/>
    <property type="evidence" value="ECO:0000266"/>
    <property type="project" value="RGD"/>
</dbReference>
<dbReference type="GO" id="GO:0030194">
    <property type="term" value="P:positive regulation of blood coagulation"/>
    <property type="evidence" value="ECO:0000266"/>
    <property type="project" value="RGD"/>
</dbReference>
<dbReference type="GO" id="GO:0043410">
    <property type="term" value="P:positive regulation of MAPK cascade"/>
    <property type="evidence" value="ECO:0000266"/>
    <property type="project" value="RGD"/>
</dbReference>
<dbReference type="GO" id="GO:0042981">
    <property type="term" value="P:regulation of apoptotic process"/>
    <property type="evidence" value="ECO:0000266"/>
    <property type="project" value="RGD"/>
</dbReference>
<dbReference type="GO" id="GO:0010310">
    <property type="term" value="P:regulation of hydrogen peroxide metabolic process"/>
    <property type="evidence" value="ECO:0000266"/>
    <property type="project" value="RGD"/>
</dbReference>
<dbReference type="GO" id="GO:0019430">
    <property type="term" value="P:removal of superoxide radicals"/>
    <property type="evidence" value="ECO:0000266"/>
    <property type="project" value="RGD"/>
</dbReference>
<dbReference type="GO" id="GO:0002536">
    <property type="term" value="P:respiratory burst involved in inflammatory response"/>
    <property type="evidence" value="ECO:0000266"/>
    <property type="project" value="RGD"/>
</dbReference>
<dbReference type="GO" id="GO:0032496">
    <property type="term" value="P:response to lipopolysaccharide"/>
    <property type="evidence" value="ECO:0000266"/>
    <property type="project" value="RGD"/>
</dbReference>
<dbReference type="GO" id="GO:0006979">
    <property type="term" value="P:response to oxidative stress"/>
    <property type="evidence" value="ECO:0000315"/>
    <property type="project" value="RGD"/>
</dbReference>
<dbReference type="GO" id="GO:0043029">
    <property type="term" value="P:T cell homeostasis"/>
    <property type="evidence" value="ECO:0000266"/>
    <property type="project" value="RGD"/>
</dbReference>
<dbReference type="GO" id="GO:0042098">
    <property type="term" value="P:T cell proliferation"/>
    <property type="evidence" value="ECO:0000266"/>
    <property type="project" value="RGD"/>
</dbReference>
<dbReference type="GO" id="GO:0048538">
    <property type="term" value="P:thymus development"/>
    <property type="evidence" value="ECO:0000266"/>
    <property type="project" value="RGD"/>
</dbReference>
<dbReference type="CDD" id="cd03015">
    <property type="entry name" value="PRX_Typ2cys"/>
    <property type="match status" value="1"/>
</dbReference>
<dbReference type="FunFam" id="3.40.30.10:FF:000003">
    <property type="entry name" value="Peroxiredoxin 1"/>
    <property type="match status" value="1"/>
</dbReference>
<dbReference type="Gene3D" id="3.40.30.10">
    <property type="entry name" value="Glutaredoxin"/>
    <property type="match status" value="1"/>
</dbReference>
<dbReference type="InterPro" id="IPR000866">
    <property type="entry name" value="AhpC/TSA"/>
</dbReference>
<dbReference type="InterPro" id="IPR050217">
    <property type="entry name" value="Peroxiredoxin"/>
</dbReference>
<dbReference type="InterPro" id="IPR024706">
    <property type="entry name" value="Peroxiredoxin_AhpC-typ"/>
</dbReference>
<dbReference type="InterPro" id="IPR019479">
    <property type="entry name" value="Peroxiredoxin_C"/>
</dbReference>
<dbReference type="InterPro" id="IPR036249">
    <property type="entry name" value="Thioredoxin-like_sf"/>
</dbReference>
<dbReference type="InterPro" id="IPR013766">
    <property type="entry name" value="Thioredoxin_domain"/>
</dbReference>
<dbReference type="PANTHER" id="PTHR10681:SF161">
    <property type="entry name" value="PEROXIREDOXIN-2"/>
    <property type="match status" value="1"/>
</dbReference>
<dbReference type="PANTHER" id="PTHR10681">
    <property type="entry name" value="THIOREDOXIN PEROXIDASE"/>
    <property type="match status" value="1"/>
</dbReference>
<dbReference type="Pfam" id="PF10417">
    <property type="entry name" value="1-cysPrx_C"/>
    <property type="match status" value="1"/>
</dbReference>
<dbReference type="Pfam" id="PF00578">
    <property type="entry name" value="AhpC-TSA"/>
    <property type="match status" value="1"/>
</dbReference>
<dbReference type="PIRSF" id="PIRSF000239">
    <property type="entry name" value="AHPC"/>
    <property type="match status" value="1"/>
</dbReference>
<dbReference type="SUPFAM" id="SSF52833">
    <property type="entry name" value="Thioredoxin-like"/>
    <property type="match status" value="1"/>
</dbReference>
<dbReference type="PROSITE" id="PS51352">
    <property type="entry name" value="THIOREDOXIN_2"/>
    <property type="match status" value="1"/>
</dbReference>
<accession>P35704</accession>
<accession>Q6PDV3</accession>
<organism>
    <name type="scientific">Rattus norvegicus</name>
    <name type="common">Rat</name>
    <dbReference type="NCBI Taxonomy" id="10116"/>
    <lineage>
        <taxon>Eukaryota</taxon>
        <taxon>Metazoa</taxon>
        <taxon>Chordata</taxon>
        <taxon>Craniata</taxon>
        <taxon>Vertebrata</taxon>
        <taxon>Euteleostomi</taxon>
        <taxon>Mammalia</taxon>
        <taxon>Eutheria</taxon>
        <taxon>Euarchontoglires</taxon>
        <taxon>Glires</taxon>
        <taxon>Rodentia</taxon>
        <taxon>Myomorpha</taxon>
        <taxon>Muroidea</taxon>
        <taxon>Muridae</taxon>
        <taxon>Murinae</taxon>
        <taxon>Rattus</taxon>
    </lineage>
</organism>
<comment type="function">
    <text evidence="1">Thiol-specific peroxidase that catalyzes the reduction of hydrogen peroxide and organic hydroperoxides to water and alcohols, respectively. Plays a role in cell protection against oxidative stress by detoxifying peroxides and as sensor of hydrogen peroxide-mediated signaling events. Might participate in the signaling cascades of growth factors and tumor necrosis factor-alpha by regulating the intracellular concentrations of H(2)O(2).</text>
</comment>
<comment type="catalytic activity">
    <reaction evidence="1">
        <text>a hydroperoxide + [thioredoxin]-dithiol = an alcohol + [thioredoxin]-disulfide + H2O</text>
        <dbReference type="Rhea" id="RHEA:62620"/>
        <dbReference type="Rhea" id="RHEA-COMP:10698"/>
        <dbReference type="Rhea" id="RHEA-COMP:10700"/>
        <dbReference type="ChEBI" id="CHEBI:15377"/>
        <dbReference type="ChEBI" id="CHEBI:29950"/>
        <dbReference type="ChEBI" id="CHEBI:30879"/>
        <dbReference type="ChEBI" id="CHEBI:35924"/>
        <dbReference type="ChEBI" id="CHEBI:50058"/>
        <dbReference type="EC" id="1.11.1.24"/>
    </reaction>
</comment>
<comment type="subunit">
    <text evidence="1">Homodimer; disulfide-linked, upon oxidation. 5 homodimers assemble to form a ring-like decamer. Interacts with TIPIN.</text>
</comment>
<comment type="subcellular location">
    <subcellularLocation>
        <location evidence="1">Cytoplasm</location>
    </subcellularLocation>
</comment>
<comment type="PTM">
    <text evidence="1 2">The enzyme can be inactivated by further oxidation of the cysteine sulfenic acid (C(P)-SOH) to sulphinic acid (C(P)-SO2H) instead of its condensation to a disulfide bond. It can be reactivated by forming a transient disulfide bond with sulfiredoxin SRXN1, which reduces the cysteine sulfinic acid in an ATP- and Mg-dependent manner.</text>
</comment>
<comment type="PTM">
    <text evidence="1">Acetylation increases resistance to transition to high molecular-mass complexes. Deacetylated by HDAC6 which decreases reducing activity.</text>
</comment>
<comment type="miscellaneous">
    <text evidence="1">The active site is a conserved redox-active cysteine residue, the peroxidatic cysteine (C(P)), which makes the nucleophilic attack on the peroxide substrate. The peroxide oxidizes the C(P)-SH to cysteine sulfenic acid (C(P)-SOH), which then reacts with another cysteine residue, the resolving cysteine (C(R)), to form a disulfide bridge. The disulfide is subsequently reduced by an appropriate electron donor to complete the catalytic cycle. In this typical 2-Cys peroxiredoxin, C(R) is provided by the other dimeric subunit to form an intersubunit disulfide. The disulfide is subsequently reduced by thioredoxin.</text>
</comment>
<comment type="similarity">
    <text evidence="4">Belongs to the peroxiredoxin family. AhpC/Prx1 subfamily.</text>
</comment>
<feature type="initiator methionine" description="Removed" evidence="1">
    <location>
        <position position="1"/>
    </location>
</feature>
<feature type="chain" id="PRO_0000135083" description="Peroxiredoxin-2">
    <location>
        <begin position="2"/>
        <end position="198"/>
    </location>
</feature>
<feature type="domain" description="Thioredoxin" evidence="3">
    <location>
        <begin position="6"/>
        <end position="164"/>
    </location>
</feature>
<feature type="active site" description="Cysteine sulfenic acid (-SOH) intermediate" evidence="1">
    <location>
        <position position="51"/>
    </location>
</feature>
<feature type="modified residue" description="N-acetylalanine" evidence="1">
    <location>
        <position position="2"/>
    </location>
</feature>
<feature type="modified residue" description="Phosphoserine" evidence="1">
    <location>
        <position position="112"/>
    </location>
</feature>
<feature type="modified residue" description="Phosphothreonine" evidence="1">
    <location>
        <position position="182"/>
    </location>
</feature>
<feature type="modified residue" description="N6-acetyllysine" evidence="1">
    <location>
        <position position="196"/>
    </location>
</feature>
<feature type="disulfide bond" description="Interchain (with C-172); in linked form" evidence="1">
    <location>
        <position position="51"/>
    </location>
</feature>
<feature type="disulfide bond" description="Interchain (with C-51); in linked form" evidence="1">
    <location>
        <position position="172"/>
    </location>
</feature>
<feature type="sequence conflict" description="In Ref. 2; AAH58481." evidence="4" ref="2">
    <original>G</original>
    <variation>A</variation>
    <location>
        <position position="17"/>
    </location>
</feature>
<proteinExistence type="evidence at protein level"/>
<reference key="1">
    <citation type="journal article" date="1994" name="Proc. Natl. Acad. Sci. U.S.A.">
        <title>Cloning and sequencing of thiol-specific antioxidant from mammalian brain: alkyl hydroperoxide reductase and thiol-specific antioxidant define a large family of antioxidant enzymes.</title>
        <authorList>
            <person name="Chae H.Z."/>
            <person name="Robison K."/>
            <person name="Poole L.B."/>
            <person name="Church G."/>
            <person name="Storz G."/>
            <person name="Rhee S.G."/>
        </authorList>
    </citation>
    <scope>NUCLEOTIDE SEQUENCE [MRNA]</scope>
    <source>
        <tissue>Brain</tissue>
    </source>
</reference>
<reference key="2">
    <citation type="journal article" date="2004" name="Genome Res.">
        <title>The status, quality, and expansion of the NIH full-length cDNA project: the Mammalian Gene Collection (MGC).</title>
        <authorList>
            <consortium name="The MGC Project Team"/>
        </authorList>
    </citation>
    <scope>NUCLEOTIDE SEQUENCE [LARGE SCALE MRNA]</scope>
    <source>
        <tissue>Pituitary</tissue>
    </source>
</reference>
<reference key="3">
    <citation type="submission" date="2007-07" db="UniProtKB">
        <authorList>
            <person name="Lubec G."/>
            <person name="Afjehi-Sadat L."/>
            <person name="Diao W."/>
            <person name="Kang S.U."/>
        </authorList>
    </citation>
    <scope>PROTEIN SEQUENCE OF 93-135 AND 140-157</scope>
    <scope>IDENTIFICATION BY MASS SPECTROMETRY</scope>
    <source>
        <strain>Sprague-Dawley</strain>
        <tissue>Brain</tissue>
        <tissue>Hippocampus</tissue>
        <tissue>Spinal cord</tissue>
    </source>
</reference>
<protein>
    <recommendedName>
        <fullName>Peroxiredoxin-2</fullName>
        <ecNumber evidence="1">1.11.1.24</ecNumber>
    </recommendedName>
    <alternativeName>
        <fullName>Thiol-specific antioxidant protein</fullName>
        <shortName>TSA</shortName>
    </alternativeName>
    <alternativeName>
        <fullName>Thioredoxin peroxidase 1</fullName>
    </alternativeName>
    <alternativeName>
        <fullName>Thioredoxin-dependent peroxide reductase 1</fullName>
    </alternativeName>
    <alternativeName>
        <fullName evidence="4">Thioredoxin-dependent peroxiredoxin 2</fullName>
    </alternativeName>
</protein>
<name>PRDX2_RAT</name>
<evidence type="ECO:0000250" key="1">
    <source>
        <dbReference type="UniProtKB" id="P32119"/>
    </source>
</evidence>
<evidence type="ECO:0000250" key="2">
    <source>
        <dbReference type="UniProtKB" id="Q06830"/>
    </source>
</evidence>
<evidence type="ECO:0000255" key="3">
    <source>
        <dbReference type="PROSITE-ProRule" id="PRU00691"/>
    </source>
</evidence>
<evidence type="ECO:0000305" key="4"/>
<sequence length="198" mass="21784">MASGNAHIGKPAPDFTGTAVVDGAFKEIKLSDYRGKYVVLFFYPLDFTFVCPTEIIAFSDHAEDFRKLGCEVLGVSVDSQFTHLAWINTPRKEGGLGPLNIPLLADVTKSLSQNYGVLKNDEGIAYRGLFIIDAKGVLRQITVNDLPVGRSVDEALRLVQAFQYTDEHGEVCPAGWKPGSDTIKPNVDDSKEYFSKHN</sequence>
<keyword id="KW-0007">Acetylation</keyword>
<keyword id="KW-0049">Antioxidant</keyword>
<keyword id="KW-0963">Cytoplasm</keyword>
<keyword id="KW-0903">Direct protein sequencing</keyword>
<keyword id="KW-1015">Disulfide bond</keyword>
<keyword id="KW-0560">Oxidoreductase</keyword>
<keyword id="KW-0575">Peroxidase</keyword>
<keyword id="KW-0597">Phosphoprotein</keyword>
<keyword id="KW-0676">Redox-active center</keyword>
<keyword id="KW-1185">Reference proteome</keyword>
<gene>
    <name type="primary">Prdx2</name>
    <name type="synonym">Tdpx1</name>
</gene>